<evidence type="ECO:0000255" key="1">
    <source>
        <dbReference type="PROSITE-ProRule" id="PRU00541"/>
    </source>
</evidence>
<evidence type="ECO:0000255" key="2">
    <source>
        <dbReference type="PROSITE-ProRule" id="PRU00542"/>
    </source>
</evidence>
<evidence type="ECO:0000256" key="3">
    <source>
        <dbReference type="SAM" id="MobiDB-lite"/>
    </source>
</evidence>
<evidence type="ECO:0000269" key="4">
    <source>
    </source>
</evidence>
<evidence type="ECO:0000269" key="5">
    <source>
    </source>
</evidence>
<evidence type="ECO:0000269" key="6">
    <source>
    </source>
</evidence>
<evidence type="ECO:0000305" key="7"/>
<evidence type="ECO:0007744" key="8">
    <source>
    </source>
</evidence>
<evidence type="ECO:0007829" key="9">
    <source>
        <dbReference type="PDB" id="6H57"/>
    </source>
</evidence>
<evidence type="ECO:0007829" key="10">
    <source>
        <dbReference type="PDB" id="7MQJ"/>
    </source>
</evidence>
<reference key="1">
    <citation type="journal article" date="1997" name="Nature">
        <title>The nucleotide sequence of Saccharomyces cerevisiae chromosome XIII.</title>
        <authorList>
            <person name="Bowman S."/>
            <person name="Churcher C.M."/>
            <person name="Badcock K."/>
            <person name="Brown D."/>
            <person name="Chillingworth T."/>
            <person name="Connor R."/>
            <person name="Dedman K."/>
            <person name="Devlin K."/>
            <person name="Gentles S."/>
            <person name="Hamlin N."/>
            <person name="Hunt S."/>
            <person name="Jagels K."/>
            <person name="Lye G."/>
            <person name="Moule S."/>
            <person name="Odell C."/>
            <person name="Pearson D."/>
            <person name="Rajandream M.A."/>
            <person name="Rice P."/>
            <person name="Skelton J."/>
            <person name="Walsh S.V."/>
            <person name="Whitehead S."/>
            <person name="Barrell B.G."/>
        </authorList>
    </citation>
    <scope>NUCLEOTIDE SEQUENCE [LARGE SCALE GENOMIC DNA]</scope>
    <source>
        <strain>ATCC 204508 / S288c</strain>
    </source>
</reference>
<reference key="2">
    <citation type="journal article" date="2014" name="G3 (Bethesda)">
        <title>The reference genome sequence of Saccharomyces cerevisiae: Then and now.</title>
        <authorList>
            <person name="Engel S.R."/>
            <person name="Dietrich F.S."/>
            <person name="Fisk D.G."/>
            <person name="Binkley G."/>
            <person name="Balakrishnan R."/>
            <person name="Costanzo M.C."/>
            <person name="Dwight S.S."/>
            <person name="Hitz B.C."/>
            <person name="Karra K."/>
            <person name="Nash R.S."/>
            <person name="Weng S."/>
            <person name="Wong E.D."/>
            <person name="Lloyd P."/>
            <person name="Skrzypek M.S."/>
            <person name="Miyasato S.R."/>
            <person name="Simison M."/>
            <person name="Cherry J.M."/>
        </authorList>
    </citation>
    <scope>GENOME REANNOTATION</scope>
    <source>
        <strain>ATCC 204508 / S288c</strain>
    </source>
</reference>
<reference key="3">
    <citation type="journal article" date="2000" name="Mol. Cell. Biol.">
        <title>Dhr1p, a putative DEAH-Box RNA helicase, is associated with the box C+D snoRNP U3.</title>
        <authorList>
            <person name="Colley A."/>
            <person name="Beggs J.D."/>
            <person name="Tollervey D."/>
            <person name="Lafontaine D.L.J."/>
        </authorList>
    </citation>
    <scope>FUNCTION</scope>
    <scope>INTERACTION WITH SNORNA U3</scope>
    <scope>SUBCELLULAR LOCATION</scope>
</reference>
<reference key="4">
    <citation type="journal article" date="2002" name="Nature">
        <title>A large nucleolar U3 ribonucleoprotein required for 18S ribosomal RNA biogenesis.</title>
        <authorList>
            <person name="Dragon F."/>
            <person name="Gallagher J.E.G."/>
            <person name="Compagnone-Post P.A."/>
            <person name="Mitchell B.M."/>
            <person name="Porwancher K.A."/>
            <person name="Wehner K.A."/>
            <person name="Wormsley S."/>
            <person name="Settlage R.E."/>
            <person name="Shabanowitz J."/>
            <person name="Osheim Y."/>
            <person name="Beyer A.L."/>
            <person name="Hunt D.F."/>
            <person name="Baserga S.J."/>
        </authorList>
    </citation>
    <scope>IDENTIFICATION IN SSU PROCESSOME BY MASS SPECTROMETRY</scope>
</reference>
<reference key="5">
    <citation type="journal article" date="2003" name="Nature">
        <title>Global analysis of protein expression in yeast.</title>
        <authorList>
            <person name="Ghaemmaghami S."/>
            <person name="Huh W.-K."/>
            <person name="Bower K."/>
            <person name="Howson R.W."/>
            <person name="Belle A."/>
            <person name="Dephoure N."/>
            <person name="O'Shea E.K."/>
            <person name="Weissman J.S."/>
        </authorList>
    </citation>
    <scope>LEVEL OF PROTEIN EXPRESSION [LARGE SCALE ANALYSIS]</scope>
</reference>
<reference key="6">
    <citation type="journal article" date="2009" name="Science">
        <title>Global analysis of Cdk1 substrate phosphorylation sites provides insights into evolution.</title>
        <authorList>
            <person name="Holt L.J."/>
            <person name="Tuch B.B."/>
            <person name="Villen J."/>
            <person name="Johnson A.D."/>
            <person name="Gygi S.P."/>
            <person name="Morgan D.O."/>
        </authorList>
    </citation>
    <scope>PHOSPHORYLATION [LARGE SCALE ANALYSIS] AT SER-181</scope>
    <scope>IDENTIFICATION BY MASS SPECTROMETRY [LARGE SCALE ANALYSIS]</scope>
</reference>
<organism>
    <name type="scientific">Saccharomyces cerevisiae (strain ATCC 204508 / S288c)</name>
    <name type="common">Baker's yeast</name>
    <dbReference type="NCBI Taxonomy" id="559292"/>
    <lineage>
        <taxon>Eukaryota</taxon>
        <taxon>Fungi</taxon>
        <taxon>Dikarya</taxon>
        <taxon>Ascomycota</taxon>
        <taxon>Saccharomycotina</taxon>
        <taxon>Saccharomycetes</taxon>
        <taxon>Saccharomycetales</taxon>
        <taxon>Saccharomycetaceae</taxon>
        <taxon>Saccharomyces</taxon>
    </lineage>
</organism>
<dbReference type="EC" id="3.6.4.13"/>
<dbReference type="EMBL" id="Z48622">
    <property type="protein sequence ID" value="CAA88553.1"/>
    <property type="molecule type" value="Genomic_DNA"/>
</dbReference>
<dbReference type="EMBL" id="BK006946">
    <property type="protein sequence ID" value="DAA10025.1"/>
    <property type="molecule type" value="Genomic_DNA"/>
</dbReference>
<dbReference type="PIR" id="S53058">
    <property type="entry name" value="S53058"/>
</dbReference>
<dbReference type="RefSeq" id="NP_013847.1">
    <property type="nucleotide sequence ID" value="NM_001182629.1"/>
</dbReference>
<dbReference type="PDB" id="6H57">
    <property type="method" value="X-ray"/>
    <property type="resolution" value="2.30 A"/>
    <property type="chains" value="A=1-1267"/>
</dbReference>
<dbReference type="PDB" id="6ZQD">
    <property type="method" value="EM"/>
    <property type="resolution" value="3.80 A"/>
    <property type="chains" value="JD=1-1267"/>
</dbReference>
<dbReference type="PDB" id="6ZQE">
    <property type="method" value="EM"/>
    <property type="resolution" value="7.10 A"/>
    <property type="chains" value="JD=1-1267"/>
</dbReference>
<dbReference type="PDB" id="6ZQF">
    <property type="method" value="EM"/>
    <property type="resolution" value="4.90 A"/>
    <property type="chains" value="JD=1-1267"/>
</dbReference>
<dbReference type="PDB" id="6ZQG">
    <property type="method" value="EM"/>
    <property type="resolution" value="3.50 A"/>
    <property type="chains" value="JD=1-1267"/>
</dbReference>
<dbReference type="PDB" id="7AJU">
    <property type="method" value="EM"/>
    <property type="resolution" value="3.80 A"/>
    <property type="chains" value="JD=1-1267"/>
</dbReference>
<dbReference type="PDB" id="7D4I">
    <property type="method" value="EM"/>
    <property type="resolution" value="4.00 A"/>
    <property type="chains" value="RZ=1-1267"/>
</dbReference>
<dbReference type="PDB" id="7D5T">
    <property type="method" value="EM"/>
    <property type="resolution" value="6.00 A"/>
    <property type="chains" value="RZ=1-1267"/>
</dbReference>
<dbReference type="PDB" id="7D63">
    <property type="method" value="EM"/>
    <property type="resolution" value="12.30 A"/>
    <property type="chains" value="RZ=1-1267"/>
</dbReference>
<dbReference type="PDB" id="7MQJ">
    <property type="method" value="X-ray"/>
    <property type="resolution" value="2.23 A"/>
    <property type="chains" value="A=379-1174"/>
</dbReference>
<dbReference type="PDBsum" id="6H57"/>
<dbReference type="PDBsum" id="6ZQD"/>
<dbReference type="PDBsum" id="6ZQE"/>
<dbReference type="PDBsum" id="6ZQF"/>
<dbReference type="PDBsum" id="6ZQG"/>
<dbReference type="PDBsum" id="7AJU"/>
<dbReference type="PDBsum" id="7D4I"/>
<dbReference type="PDBsum" id="7D5T"/>
<dbReference type="PDBsum" id="7D63"/>
<dbReference type="PDBsum" id="7MQJ"/>
<dbReference type="EMDB" id="EMD-11360"/>
<dbReference type="EMDB" id="EMD-11361"/>
<dbReference type="EMDB" id="EMD-11362"/>
<dbReference type="EMDB" id="EMD-11363"/>
<dbReference type="EMDB" id="EMD-11808"/>
<dbReference type="EMDB" id="EMD-30574"/>
<dbReference type="EMDB" id="EMD-30585"/>
<dbReference type="EMDB" id="EMD-30588"/>
<dbReference type="SMR" id="Q04217"/>
<dbReference type="BioGRID" id="35305">
    <property type="interactions" value="528"/>
</dbReference>
<dbReference type="ComplexPortal" id="CPX-1604">
    <property type="entry name" value="Small ribosomal subunit processome"/>
</dbReference>
<dbReference type="DIP" id="DIP-6722N"/>
<dbReference type="FunCoup" id="Q04217">
    <property type="interactions" value="1498"/>
</dbReference>
<dbReference type="IntAct" id="Q04217">
    <property type="interactions" value="89"/>
</dbReference>
<dbReference type="MINT" id="Q04217"/>
<dbReference type="STRING" id="4932.YMR128W"/>
<dbReference type="GlyGen" id="Q04217">
    <property type="glycosylation" value="1 site"/>
</dbReference>
<dbReference type="iPTMnet" id="Q04217"/>
<dbReference type="PaxDb" id="4932-YMR128W"/>
<dbReference type="PeptideAtlas" id="Q04217"/>
<dbReference type="EnsemblFungi" id="YMR128W_mRNA">
    <property type="protein sequence ID" value="YMR128W"/>
    <property type="gene ID" value="YMR128W"/>
</dbReference>
<dbReference type="GeneID" id="855158"/>
<dbReference type="KEGG" id="sce:YMR128W"/>
<dbReference type="AGR" id="SGD:S000004735"/>
<dbReference type="SGD" id="S000004735">
    <property type="gene designation" value="ECM16"/>
</dbReference>
<dbReference type="VEuPathDB" id="FungiDB:YMR128W"/>
<dbReference type="eggNOG" id="KOG0926">
    <property type="taxonomic scope" value="Eukaryota"/>
</dbReference>
<dbReference type="GeneTree" id="ENSGT00550000074985"/>
<dbReference type="HOGENOM" id="CLU_001832_0_1_1"/>
<dbReference type="InParanoid" id="Q04217"/>
<dbReference type="OMA" id="FCYLDDK"/>
<dbReference type="OrthoDB" id="10253254at2759"/>
<dbReference type="BioCyc" id="YEAST:G3O-32821-MONOMER"/>
<dbReference type="Reactome" id="R-SCE-6791226">
    <property type="pathway name" value="Major pathway of rRNA processing in the nucleolus and cytosol"/>
</dbReference>
<dbReference type="BioGRID-ORCS" id="855158">
    <property type="hits" value="5 hits in 10 CRISPR screens"/>
</dbReference>
<dbReference type="CD-CODE" id="BDAE0F88">
    <property type="entry name" value="Nucleolus"/>
</dbReference>
<dbReference type="PRO" id="PR:Q04217"/>
<dbReference type="Proteomes" id="UP000002311">
    <property type="component" value="Chromosome XIII"/>
</dbReference>
<dbReference type="RNAct" id="Q04217">
    <property type="molecule type" value="protein"/>
</dbReference>
<dbReference type="GO" id="GO:0030686">
    <property type="term" value="C:90S preribosome"/>
    <property type="evidence" value="ECO:0007005"/>
    <property type="project" value="SGD"/>
</dbReference>
<dbReference type="GO" id="GO:0005739">
    <property type="term" value="C:mitochondrion"/>
    <property type="evidence" value="ECO:0007005"/>
    <property type="project" value="SGD"/>
</dbReference>
<dbReference type="GO" id="GO:0005730">
    <property type="term" value="C:nucleolus"/>
    <property type="evidence" value="ECO:0000314"/>
    <property type="project" value="SGD"/>
</dbReference>
<dbReference type="GO" id="GO:0005654">
    <property type="term" value="C:nucleoplasm"/>
    <property type="evidence" value="ECO:0000304"/>
    <property type="project" value="Reactome"/>
</dbReference>
<dbReference type="GO" id="GO:0032040">
    <property type="term" value="C:small-subunit processome"/>
    <property type="evidence" value="ECO:0000314"/>
    <property type="project" value="SGD"/>
</dbReference>
<dbReference type="GO" id="GO:0005524">
    <property type="term" value="F:ATP binding"/>
    <property type="evidence" value="ECO:0007669"/>
    <property type="project" value="UniProtKB-KW"/>
</dbReference>
<dbReference type="GO" id="GO:0016887">
    <property type="term" value="F:ATP hydrolysis activity"/>
    <property type="evidence" value="ECO:0007669"/>
    <property type="project" value="RHEA"/>
</dbReference>
<dbReference type="GO" id="GO:0004386">
    <property type="term" value="F:helicase activity"/>
    <property type="evidence" value="ECO:0000318"/>
    <property type="project" value="GO_Central"/>
</dbReference>
<dbReference type="GO" id="GO:0003723">
    <property type="term" value="F:RNA binding"/>
    <property type="evidence" value="ECO:0000318"/>
    <property type="project" value="GO_Central"/>
</dbReference>
<dbReference type="GO" id="GO:0003724">
    <property type="term" value="F:RNA helicase activity"/>
    <property type="evidence" value="ECO:0000314"/>
    <property type="project" value="SGD"/>
</dbReference>
<dbReference type="GO" id="GO:0030490">
    <property type="term" value="P:maturation of SSU-rRNA"/>
    <property type="evidence" value="ECO:0000303"/>
    <property type="project" value="ComplexPortal"/>
</dbReference>
<dbReference type="GO" id="GO:0000462">
    <property type="term" value="P:maturation of SSU-rRNA from tricistronic rRNA transcript (SSU-rRNA, 5.8S rRNA, LSU-rRNA)"/>
    <property type="evidence" value="ECO:0000315"/>
    <property type="project" value="SGD"/>
</dbReference>
<dbReference type="GO" id="GO:0042254">
    <property type="term" value="P:ribosome biogenesis"/>
    <property type="evidence" value="ECO:0000314"/>
    <property type="project" value="SGD"/>
</dbReference>
<dbReference type="CDD" id="cd17982">
    <property type="entry name" value="DEXHc_DHX37"/>
    <property type="match status" value="1"/>
</dbReference>
<dbReference type="CDD" id="cd18791">
    <property type="entry name" value="SF2_C_RHA"/>
    <property type="match status" value="1"/>
</dbReference>
<dbReference type="FunFam" id="1.20.120.1080:FF:000023">
    <property type="entry name" value="ATP-dependent RNA helicase"/>
    <property type="match status" value="1"/>
</dbReference>
<dbReference type="FunFam" id="3.40.50.300:FF:003770">
    <property type="entry name" value="ATP-dependent RNA helicase DHR1, putative"/>
    <property type="match status" value="1"/>
</dbReference>
<dbReference type="FunFam" id="3.40.50.300:FF:000637">
    <property type="entry name" value="ATP-dependent RNA helicase DHX37/DHR1"/>
    <property type="match status" value="1"/>
</dbReference>
<dbReference type="Gene3D" id="1.20.120.1080">
    <property type="match status" value="1"/>
</dbReference>
<dbReference type="Gene3D" id="3.40.50.300">
    <property type="entry name" value="P-loop containing nucleotide triphosphate hydrolases"/>
    <property type="match status" value="2"/>
</dbReference>
<dbReference type="InterPro" id="IPR011709">
    <property type="entry name" value="DEAD-box_helicase_OB_fold"/>
</dbReference>
<dbReference type="InterPro" id="IPR011545">
    <property type="entry name" value="DEAD/DEAH_box_helicase_dom"/>
</dbReference>
<dbReference type="InterPro" id="IPR002464">
    <property type="entry name" value="DNA/RNA_helicase_DEAH_CS"/>
</dbReference>
<dbReference type="InterPro" id="IPR048333">
    <property type="entry name" value="HA2_WH"/>
</dbReference>
<dbReference type="InterPro" id="IPR007502">
    <property type="entry name" value="Helicase-assoc_dom"/>
</dbReference>
<dbReference type="InterPro" id="IPR014001">
    <property type="entry name" value="Helicase_ATP-bd"/>
</dbReference>
<dbReference type="InterPro" id="IPR001650">
    <property type="entry name" value="Helicase_C-like"/>
</dbReference>
<dbReference type="InterPro" id="IPR027417">
    <property type="entry name" value="P-loop_NTPase"/>
</dbReference>
<dbReference type="PANTHER" id="PTHR18934">
    <property type="entry name" value="ATP-DEPENDENT RNA HELICASE"/>
    <property type="match status" value="1"/>
</dbReference>
<dbReference type="PANTHER" id="PTHR18934:SF99">
    <property type="entry name" value="ATP-DEPENDENT RNA HELICASE DHX37-RELATED"/>
    <property type="match status" value="1"/>
</dbReference>
<dbReference type="Pfam" id="PF00270">
    <property type="entry name" value="DEAD"/>
    <property type="match status" value="1"/>
</dbReference>
<dbReference type="Pfam" id="PF21010">
    <property type="entry name" value="HA2_C"/>
    <property type="match status" value="1"/>
</dbReference>
<dbReference type="Pfam" id="PF04408">
    <property type="entry name" value="HA2_N"/>
    <property type="match status" value="1"/>
</dbReference>
<dbReference type="Pfam" id="PF00271">
    <property type="entry name" value="Helicase_C"/>
    <property type="match status" value="1"/>
</dbReference>
<dbReference type="Pfam" id="PF07717">
    <property type="entry name" value="OB_NTP_bind"/>
    <property type="match status" value="1"/>
</dbReference>
<dbReference type="SMART" id="SM00487">
    <property type="entry name" value="DEXDc"/>
    <property type="match status" value="1"/>
</dbReference>
<dbReference type="SMART" id="SM00847">
    <property type="entry name" value="HA2"/>
    <property type="match status" value="1"/>
</dbReference>
<dbReference type="SMART" id="SM00490">
    <property type="entry name" value="HELICc"/>
    <property type="match status" value="1"/>
</dbReference>
<dbReference type="SUPFAM" id="SSF52540">
    <property type="entry name" value="P-loop containing nucleoside triphosphate hydrolases"/>
    <property type="match status" value="1"/>
</dbReference>
<dbReference type="PROSITE" id="PS00690">
    <property type="entry name" value="DEAH_ATP_HELICASE"/>
    <property type="match status" value="1"/>
</dbReference>
<dbReference type="PROSITE" id="PS51192">
    <property type="entry name" value="HELICASE_ATP_BIND_1"/>
    <property type="match status" value="1"/>
</dbReference>
<dbReference type="PROSITE" id="PS51194">
    <property type="entry name" value="HELICASE_CTER"/>
    <property type="match status" value="1"/>
</dbReference>
<feature type="chain" id="PRO_0000055162" description="Probable ATP-dependent RNA helicase DHR1">
    <location>
        <begin position="1"/>
        <end position="1267"/>
    </location>
</feature>
<feature type="domain" description="Helicase ATP-binding" evidence="1">
    <location>
        <begin position="401"/>
        <end position="580"/>
    </location>
</feature>
<feature type="domain" description="Helicase C-terminal" evidence="2">
    <location>
        <begin position="675"/>
        <end position="858"/>
    </location>
</feature>
<feature type="region of interest" description="Disordered" evidence="3">
    <location>
        <begin position="1"/>
        <end position="67"/>
    </location>
</feature>
<feature type="region of interest" description="Disordered" evidence="3">
    <location>
        <begin position="168"/>
        <end position="233"/>
    </location>
</feature>
<feature type="region of interest" description="Disordered" evidence="3">
    <location>
        <begin position="255"/>
        <end position="313"/>
    </location>
</feature>
<feature type="region of interest" description="Disordered" evidence="3">
    <location>
        <begin position="693"/>
        <end position="720"/>
    </location>
</feature>
<feature type="region of interest" description="Disordered" evidence="3">
    <location>
        <begin position="955"/>
        <end position="976"/>
    </location>
</feature>
<feature type="short sequence motif" description="DEAH box">
    <location>
        <begin position="516"/>
        <end position="519"/>
    </location>
</feature>
<feature type="compositionally biased region" description="Basic and acidic residues" evidence="3">
    <location>
        <begin position="7"/>
        <end position="25"/>
    </location>
</feature>
<feature type="compositionally biased region" description="Basic and acidic residues" evidence="3">
    <location>
        <begin position="32"/>
        <end position="43"/>
    </location>
</feature>
<feature type="compositionally biased region" description="Acidic residues" evidence="3">
    <location>
        <begin position="175"/>
        <end position="192"/>
    </location>
</feature>
<feature type="compositionally biased region" description="Basic and acidic residues" evidence="3">
    <location>
        <begin position="202"/>
        <end position="217"/>
    </location>
</feature>
<feature type="compositionally biased region" description="Acidic residues" evidence="3">
    <location>
        <begin position="264"/>
        <end position="284"/>
    </location>
</feature>
<feature type="compositionally biased region" description="Acidic residues" evidence="3">
    <location>
        <begin position="695"/>
        <end position="719"/>
    </location>
</feature>
<feature type="binding site" evidence="1">
    <location>
        <begin position="414"/>
        <end position="421"/>
    </location>
    <ligand>
        <name>ATP</name>
        <dbReference type="ChEBI" id="CHEBI:30616"/>
    </ligand>
</feature>
<feature type="modified residue" description="Phosphoserine" evidence="8">
    <location>
        <position position="181"/>
    </location>
</feature>
<feature type="helix" evidence="10">
    <location>
        <begin position="382"/>
        <end position="390"/>
    </location>
</feature>
<feature type="helix" evidence="10">
    <location>
        <begin position="392"/>
        <end position="395"/>
    </location>
</feature>
<feature type="helix" evidence="10">
    <location>
        <begin position="397"/>
        <end position="406"/>
    </location>
</feature>
<feature type="strand" evidence="10">
    <location>
        <begin position="408"/>
        <end position="413"/>
    </location>
</feature>
<feature type="helix" evidence="10">
    <location>
        <begin position="420"/>
        <end position="430"/>
    </location>
</feature>
<feature type="turn" evidence="10">
    <location>
        <begin position="431"/>
        <end position="434"/>
    </location>
</feature>
<feature type="strand" evidence="10">
    <location>
        <begin position="443"/>
        <end position="450"/>
    </location>
</feature>
<feature type="helix" evidence="10">
    <location>
        <begin position="452"/>
        <end position="465"/>
    </location>
</feature>
<feature type="helix" evidence="10">
    <location>
        <begin position="467"/>
        <end position="472"/>
    </location>
</feature>
<feature type="strand" evidence="10">
    <location>
        <begin position="473"/>
        <end position="476"/>
    </location>
</feature>
<feature type="strand" evidence="10">
    <location>
        <begin position="489"/>
        <end position="493"/>
    </location>
</feature>
<feature type="helix" evidence="10">
    <location>
        <begin position="494"/>
        <end position="503"/>
    </location>
</feature>
<feature type="strand" evidence="10">
    <location>
        <begin position="510"/>
        <end position="515"/>
    </location>
</feature>
<feature type="helix" evidence="10">
    <location>
        <begin position="518"/>
        <end position="520"/>
    </location>
</feature>
<feature type="helix" evidence="10">
    <location>
        <begin position="523"/>
        <end position="545"/>
    </location>
</feature>
<feature type="turn" evidence="10">
    <location>
        <begin position="547"/>
        <end position="549"/>
    </location>
</feature>
<feature type="strand" evidence="10">
    <location>
        <begin position="554"/>
        <end position="562"/>
    </location>
</feature>
<feature type="helix" evidence="10">
    <location>
        <begin position="565"/>
        <end position="568"/>
    </location>
</feature>
<feature type="turn" evidence="10">
    <location>
        <begin position="571"/>
        <end position="573"/>
    </location>
</feature>
<feature type="strand" evidence="10">
    <location>
        <begin position="580"/>
        <end position="582"/>
    </location>
</feature>
<feature type="strand" evidence="10">
    <location>
        <begin position="590"/>
        <end position="594"/>
    </location>
</feature>
<feature type="helix" evidence="10">
    <location>
        <begin position="602"/>
        <end position="616"/>
    </location>
</feature>
<feature type="strand" evidence="10">
    <location>
        <begin position="621"/>
        <end position="625"/>
    </location>
</feature>
<feature type="helix" evidence="10">
    <location>
        <begin position="629"/>
        <end position="642"/>
    </location>
</feature>
<feature type="helix" evidence="10">
    <location>
        <begin position="651"/>
        <end position="654"/>
    </location>
</feature>
<feature type="turn" evidence="10">
    <location>
        <begin position="666"/>
        <end position="668"/>
    </location>
</feature>
<feature type="helix" evidence="10">
    <location>
        <begin position="673"/>
        <end position="675"/>
    </location>
</feature>
<feature type="helix" evidence="10">
    <location>
        <begin position="685"/>
        <end position="691"/>
    </location>
</feature>
<feature type="helix" evidence="10">
    <location>
        <begin position="693"/>
        <end position="696"/>
    </location>
</feature>
<feature type="strand" evidence="10">
    <location>
        <begin position="729"/>
        <end position="734"/>
    </location>
</feature>
<feature type="helix" evidence="10">
    <location>
        <begin position="740"/>
        <end position="743"/>
    </location>
</feature>
<feature type="helix" evidence="10">
    <location>
        <begin position="744"/>
        <end position="747"/>
    </location>
</feature>
<feature type="strand" evidence="10">
    <location>
        <begin position="755"/>
        <end position="760"/>
    </location>
</feature>
<feature type="helix" evidence="10">
    <location>
        <begin position="763"/>
        <end position="766"/>
    </location>
</feature>
<feature type="strand" evidence="10">
    <location>
        <begin position="773"/>
        <end position="778"/>
    </location>
</feature>
<feature type="strand" evidence="10">
    <location>
        <begin position="781"/>
        <end position="788"/>
    </location>
</feature>
<feature type="turn" evidence="10">
    <location>
        <begin position="789"/>
        <end position="792"/>
    </location>
</feature>
<feature type="strand" evidence="10">
    <location>
        <begin position="793"/>
        <end position="800"/>
    </location>
</feature>
<feature type="helix" evidence="10">
    <location>
        <begin position="803"/>
        <end position="811"/>
    </location>
</feature>
<feature type="helix" evidence="10">
    <location>
        <begin position="812"/>
        <end position="814"/>
    </location>
</feature>
<feature type="strand" evidence="10">
    <location>
        <begin position="815"/>
        <end position="825"/>
    </location>
</feature>
<feature type="helix" evidence="10">
    <location>
        <begin position="827"/>
        <end position="833"/>
    </location>
</feature>
<feature type="helix" evidence="10">
    <location>
        <begin position="841"/>
        <end position="844"/>
    </location>
</feature>
<feature type="helix" evidence="10">
    <location>
        <begin position="847"/>
        <end position="856"/>
    </location>
</feature>
<feature type="helix" evidence="10">
    <location>
        <begin position="873"/>
        <end position="885"/>
    </location>
</feature>
<feature type="helix" evidence="10">
    <location>
        <begin position="897"/>
        <end position="903"/>
    </location>
</feature>
<feature type="strand" evidence="10">
    <location>
        <begin position="905"/>
        <end position="907"/>
    </location>
</feature>
<feature type="helix" evidence="10">
    <location>
        <begin position="909"/>
        <end position="916"/>
    </location>
</feature>
<feature type="turn" evidence="9">
    <location>
        <begin position="919"/>
        <end position="922"/>
    </location>
</feature>
<feature type="helix" evidence="10">
    <location>
        <begin position="924"/>
        <end position="936"/>
    </location>
</feature>
<feature type="helix" evidence="10">
    <location>
        <begin position="943"/>
        <end position="946"/>
    </location>
</feature>
<feature type="helix" evidence="10">
    <location>
        <begin position="976"/>
        <end position="993"/>
    </location>
</feature>
<feature type="helix" evidence="10">
    <location>
        <begin position="1002"/>
        <end position="1013"/>
    </location>
</feature>
<feature type="helix" evidence="10">
    <location>
        <begin position="1018"/>
        <end position="1020"/>
    </location>
</feature>
<feature type="helix" evidence="10">
    <location>
        <begin position="1021"/>
        <end position="1028"/>
    </location>
</feature>
<feature type="helix" evidence="10">
    <location>
        <begin position="1032"/>
        <end position="1053"/>
    </location>
</feature>
<feature type="strand" evidence="10">
    <location>
        <begin position="1054"/>
        <end position="1056"/>
    </location>
</feature>
<feature type="helix" evidence="10">
    <location>
        <begin position="1064"/>
        <end position="1067"/>
    </location>
</feature>
<feature type="helix" evidence="10">
    <location>
        <begin position="1074"/>
        <end position="1087"/>
    </location>
</feature>
<feature type="turn" evidence="10">
    <location>
        <begin position="1088"/>
        <end position="1090"/>
    </location>
</feature>
<feature type="strand" evidence="10">
    <location>
        <begin position="1092"/>
        <end position="1095"/>
    </location>
</feature>
<feature type="helix" evidence="10">
    <location>
        <begin position="1096"/>
        <end position="1099"/>
    </location>
</feature>
<feature type="strand" evidence="10">
    <location>
        <begin position="1100"/>
        <end position="1104"/>
    </location>
</feature>
<feature type="strand" evidence="9">
    <location>
        <begin position="1108"/>
        <end position="1110"/>
    </location>
</feature>
<feature type="helix" evidence="10">
    <location>
        <begin position="1112"/>
        <end position="1114"/>
    </location>
</feature>
<feature type="strand" evidence="10">
    <location>
        <begin position="1117"/>
        <end position="1119"/>
    </location>
</feature>
<feature type="helix" evidence="10">
    <location>
        <begin position="1128"/>
        <end position="1131"/>
    </location>
</feature>
<feature type="strand" evidence="10">
    <location>
        <begin position="1133"/>
        <end position="1135"/>
    </location>
</feature>
<feature type="helix" evidence="10">
    <location>
        <begin position="1140"/>
        <end position="1143"/>
    </location>
</feature>
<feature type="strand" evidence="10">
    <location>
        <begin position="1150"/>
        <end position="1158"/>
    </location>
</feature>
<feature type="strand" evidence="10">
    <location>
        <begin position="1160"/>
        <end position="1164"/>
    </location>
</feature>
<feature type="strand" evidence="10">
    <location>
        <begin position="1166"/>
        <end position="1172"/>
    </location>
</feature>
<feature type="helix" evidence="9">
    <location>
        <begin position="1175"/>
        <end position="1184"/>
    </location>
</feature>
<feature type="strand" evidence="9">
    <location>
        <begin position="1188"/>
        <end position="1190"/>
    </location>
</feature>
<feature type="turn" evidence="9">
    <location>
        <begin position="1197"/>
        <end position="1199"/>
    </location>
</feature>
<feature type="strand" evidence="9">
    <location>
        <begin position="1202"/>
        <end position="1205"/>
    </location>
</feature>
<feature type="strand" evidence="9">
    <location>
        <begin position="1208"/>
        <end position="1213"/>
    </location>
</feature>
<feature type="strand" evidence="9">
    <location>
        <begin position="1215"/>
        <end position="1219"/>
    </location>
</feature>
<feature type="strand" evidence="9">
    <location>
        <begin position="1234"/>
        <end position="1241"/>
    </location>
</feature>
<feature type="strand" evidence="9">
    <location>
        <begin position="1244"/>
        <end position="1251"/>
    </location>
</feature>
<feature type="helix" evidence="9">
    <location>
        <begin position="1253"/>
        <end position="1262"/>
    </location>
</feature>
<gene>
    <name type="primary">ECM16</name>
    <name type="synonym">DHR1</name>
    <name type="ordered locus">YMR128W</name>
    <name type="ORF">YM9553.04</name>
</gene>
<sequence length="1267" mass="144955">MGTYRKRFNEKARSGHMAKLKELKRIRNKQFTRQDENDERVENPDSAPAESSTTEPNANAEILEPLTEEEKKMKKRKLQELFTPKESKVSRLKKKRLDKFIEHQLKREERKTIIGKLQDYKIDTSLLTSSKRLGEGRQTKKEEFKEALSLERQGRGNEQTNEILYEEYEPKVWDEYGEGGSSEDDDGEDDFEASFGSMPKPTDNEEKKSSGFIDHRPAKFGGSGLSFGFSNIKVINKESKTPKKKYNWRQRVEMEELKKHGKEDEMDFDTTSEDDDEEEDQEEEDKMHPSENPLEEVESADSETGSEKFDQNDVANEFKDWANQEIKKLEGRDQELVTPTLNIDYKPIIRKEDLDDGLQEAYVPINENSTRKAFYVEVSRSDEIQKARIQLPVFGEEHKIMEAIHHNDVVIICGETGSGKTTQVPQFLYEAGFGAEDSPDYPGMVGITQPRRVAAVSMAERVANELGDHGHKVGYQIRFDSTAKEDTKVKFMTDGVLLREMMHDFKLTKYSSIIIDEAHERNINTDILIGMLSRCVRLRAKLHKENPIEHKKLKLIIMSATLRVSDFSENKTLFPIAPPVLQVDARQFPVSIHFNRRTAFNYTDEAFRKTCKIHQKLPPGAILVFLTGQQEITHMVKRLRKEFPFKKNSKYNKDLETPVSKMGINSKTTDLEAEDIDFSVQVIDQDKFKSAIRYEEDEGNSGNGEDEEDEEEEGFEEVLTEGQTANDPLYVLPLYSLLPTKEQMRVFQKPPQGSRLCIVATNVAETSLTIPGVRYVVDSGRSKERKYNESNGVQSFEVGWVSKASANQRSGRAGRTGPGHCYRLYSSAVFEHDFEQFSKPEILRMPVESIVLQMKSMAIHNIINFPFPTPPDRVALSKAIQLLQYLGALDNKEMITEDGKKMSLFPLSPRFSKMLLVSDEKACLPYIVAIVSALSVGDPFINEFELGINEISRKPNPDENLDDKIREHDESTPGMDPELKKELRSKFYKSRSQFSKLDKFSDVFRLLSVVSAMDYVPKEQKEIFMKKNFLRGKLMEEIVKLRKQLMYIIKSNTSKENIAVVIRNEDLKSDIPSVIQIKLLKQMICAGFVDHVAVRADVLFPDDAKITNRTSIINIPYIPVLATRTPNIEDCFVYIHPTSILNNLGEMPPKYMLYYSLHLGGNNKTRMNTLCDIASTPLANIARKGLLLTYSKPLTGQGLKTVNLSPTERYCYVVPRFGSTVDNDLKIGWDLNPIAVHQKKQKGQWTVIKFITRKGFQTITGEEKEKK</sequence>
<name>DHR1_YEAST</name>
<keyword id="KW-0002">3D-structure</keyword>
<keyword id="KW-0067">ATP-binding</keyword>
<keyword id="KW-0347">Helicase</keyword>
<keyword id="KW-0378">Hydrolase</keyword>
<keyword id="KW-0547">Nucleotide-binding</keyword>
<keyword id="KW-0539">Nucleus</keyword>
<keyword id="KW-0597">Phosphoprotein</keyword>
<keyword id="KW-1185">Reference proteome</keyword>
<keyword id="KW-0687">Ribonucleoprotein</keyword>
<keyword id="KW-0690">Ribosome biogenesis</keyword>
<keyword id="KW-0694">RNA-binding</keyword>
<keyword id="KW-0698">rRNA processing</keyword>
<accession>Q04217</accession>
<accession>D6VZV1</accession>
<comment type="function">
    <text evidence="4">Probable ATP-binding RNA helicase. Required for 18S rRNA synthesis. May play a role in restructuring of the pre-rRNA.</text>
</comment>
<comment type="catalytic activity">
    <reaction>
        <text>ATP + H2O = ADP + phosphate + H(+)</text>
        <dbReference type="Rhea" id="RHEA:13065"/>
        <dbReference type="ChEBI" id="CHEBI:15377"/>
        <dbReference type="ChEBI" id="CHEBI:15378"/>
        <dbReference type="ChEBI" id="CHEBI:30616"/>
        <dbReference type="ChEBI" id="CHEBI:43474"/>
        <dbReference type="ChEBI" id="CHEBI:456216"/>
        <dbReference type="EC" id="3.6.4.13"/>
    </reaction>
</comment>
<comment type="subunit">
    <text evidence="4 5">Interacts with snoRNA U3. Component of the ribosomal small subunit (SSU) processome composed of at least 40 protein subunits and snoRNA U3.</text>
</comment>
<comment type="interaction">
    <interactant intactId="EBI-1820">
        <id>Q04217</id>
    </interactant>
    <interactant intactId="EBI-11168">
        <id>P47083</id>
        <label>MPP10</label>
    </interactant>
    <organismsDiffer>false</organismsDiffer>
    <experiments>3</experiments>
</comment>
<comment type="interaction">
    <interactant intactId="EBI-1820">
        <id>Q04217</id>
    </interactant>
    <interactant intactId="EBI-27917">
        <id>Q04500</id>
        <label>UTP14</label>
    </interactant>
    <organismsDiffer>false</organismsDiffer>
    <experiments>3</experiments>
</comment>
<comment type="interaction">
    <interactant intactId="EBI-1820">
        <id>Q04217</id>
    </interactant>
    <interactant intactId="EBI-1878">
        <id>P53254</id>
        <label>UTP22</label>
    </interactant>
    <organismsDiffer>false</organismsDiffer>
    <experiments>4</experiments>
</comment>
<comment type="subcellular location">
    <subcellularLocation>
        <location evidence="4">Nucleus</location>
        <location evidence="4">Nucleolus</location>
    </subcellularLocation>
</comment>
<comment type="miscellaneous">
    <text evidence="6">Present with 2000 molecules/cell in log phase SD medium.</text>
</comment>
<comment type="similarity">
    <text evidence="7">Belongs to the DEAD box helicase family. DEAH subfamily.</text>
</comment>
<proteinExistence type="evidence at protein level"/>
<protein>
    <recommendedName>
        <fullName>Probable ATP-dependent RNA helicase DHR1</fullName>
        <ecNumber>3.6.4.13</ecNumber>
    </recommendedName>
    <alternativeName>
        <fullName>DEAH box RNA helicase DHR1</fullName>
    </alternativeName>
    <alternativeName>
        <fullName>Extracellular mutant protein 16</fullName>
    </alternativeName>
</protein>